<evidence type="ECO:0000255" key="1">
    <source>
        <dbReference type="HAMAP-Rule" id="MF_01186"/>
    </source>
</evidence>
<keyword id="KW-0998">Cell outer membrane</keyword>
<keyword id="KW-0449">Lipoprotein</keyword>
<keyword id="KW-0472">Membrane</keyword>
<keyword id="KW-0564">Palmitate</keyword>
<keyword id="KW-1185">Reference proteome</keyword>
<keyword id="KW-0732">Signal</keyword>
<protein>
    <recommendedName>
        <fullName evidence="1">LPS-assembly lipoprotein LptE</fullName>
    </recommendedName>
</protein>
<sequence>MRHRILTLLLGLAVLVTAGCGFHLRGTTQVPAELKKLQITSSDPYGPLARSVRQQLRLNNVTILEDGSADVPVLKLIDSSENKDTVSVFQDGKAAERQLTLNVNAQVIMPDGSVYPLRSRVDRSFFDNPLEALAKDAENEIINQEMREQAARRLVRQLLTVHNAEKQKAREKQVGQQAAQAQ</sequence>
<reference key="1">
    <citation type="journal article" date="2003" name="Nat. Biotechnol.">
        <title>The genome sequence of the entomopathogenic bacterium Photorhabdus luminescens.</title>
        <authorList>
            <person name="Duchaud E."/>
            <person name="Rusniok C."/>
            <person name="Frangeul L."/>
            <person name="Buchrieser C."/>
            <person name="Givaudan A."/>
            <person name="Taourit S."/>
            <person name="Bocs S."/>
            <person name="Boursaux-Eude C."/>
            <person name="Chandler M."/>
            <person name="Charles J.-F."/>
            <person name="Dassa E."/>
            <person name="Derose R."/>
            <person name="Derzelle S."/>
            <person name="Freyssinet G."/>
            <person name="Gaudriault S."/>
            <person name="Medigue C."/>
            <person name="Lanois A."/>
            <person name="Powell K."/>
            <person name="Siguier P."/>
            <person name="Vincent R."/>
            <person name="Wingate V."/>
            <person name="Zouine M."/>
            <person name="Glaser P."/>
            <person name="Boemare N."/>
            <person name="Danchin A."/>
            <person name="Kunst F."/>
        </authorList>
    </citation>
    <scope>NUCLEOTIDE SEQUENCE [LARGE SCALE GENOMIC DNA]</scope>
    <source>
        <strain>DSM 15139 / CIP 105565 / TT01</strain>
    </source>
</reference>
<feature type="signal peptide" evidence="1">
    <location>
        <begin position="1"/>
        <end position="19"/>
    </location>
</feature>
<feature type="chain" id="PRO_0000281180" description="LPS-assembly lipoprotein LptE">
    <location>
        <begin position="20"/>
        <end position="182"/>
    </location>
</feature>
<feature type="lipid moiety-binding region" description="N-palmitoyl cysteine" evidence="1">
    <location>
        <position position="20"/>
    </location>
</feature>
<feature type="lipid moiety-binding region" description="S-diacylglycerol cysteine" evidence="1">
    <location>
        <position position="20"/>
    </location>
</feature>
<organism>
    <name type="scientific">Photorhabdus laumondii subsp. laumondii (strain DSM 15139 / CIP 105565 / TT01)</name>
    <name type="common">Photorhabdus luminescens subsp. laumondii</name>
    <dbReference type="NCBI Taxonomy" id="243265"/>
    <lineage>
        <taxon>Bacteria</taxon>
        <taxon>Pseudomonadati</taxon>
        <taxon>Pseudomonadota</taxon>
        <taxon>Gammaproteobacteria</taxon>
        <taxon>Enterobacterales</taxon>
        <taxon>Morganellaceae</taxon>
        <taxon>Photorhabdus</taxon>
    </lineage>
</organism>
<name>LPTE_PHOLL</name>
<accession>Q7N756</accession>
<comment type="function">
    <text evidence="1">Together with LptD, is involved in the assembly of lipopolysaccharide (LPS) at the surface of the outer membrane. Required for the proper assembly of LptD. Binds LPS and may serve as the LPS recognition site at the outer membrane.</text>
</comment>
<comment type="subunit">
    <text evidence="1">Component of the lipopolysaccharide transport and assembly complex. Interacts with LptD.</text>
</comment>
<comment type="subcellular location">
    <subcellularLocation>
        <location evidence="1">Cell outer membrane</location>
        <topology evidence="1">Lipid-anchor</topology>
    </subcellularLocation>
</comment>
<comment type="similarity">
    <text evidence="1">Belongs to the LptE lipoprotein family.</text>
</comment>
<dbReference type="EMBL" id="BX571863">
    <property type="protein sequence ID" value="CAE13596.1"/>
    <property type="molecule type" value="Genomic_DNA"/>
</dbReference>
<dbReference type="RefSeq" id="WP_011145626.1">
    <property type="nucleotide sequence ID" value="NC_005126.1"/>
</dbReference>
<dbReference type="SMR" id="Q7N756"/>
<dbReference type="STRING" id="243265.plu1302"/>
<dbReference type="GeneID" id="48847580"/>
<dbReference type="KEGG" id="plu:plu1302"/>
<dbReference type="eggNOG" id="COG2980">
    <property type="taxonomic scope" value="Bacteria"/>
</dbReference>
<dbReference type="HOGENOM" id="CLU_103309_1_1_6"/>
<dbReference type="OrthoDB" id="5801564at2"/>
<dbReference type="Proteomes" id="UP000002514">
    <property type="component" value="Chromosome"/>
</dbReference>
<dbReference type="GO" id="GO:0009279">
    <property type="term" value="C:cell outer membrane"/>
    <property type="evidence" value="ECO:0007669"/>
    <property type="project" value="UniProtKB-SubCell"/>
</dbReference>
<dbReference type="GO" id="GO:1990351">
    <property type="term" value="C:transporter complex"/>
    <property type="evidence" value="ECO:0007669"/>
    <property type="project" value="TreeGrafter"/>
</dbReference>
<dbReference type="GO" id="GO:0001530">
    <property type="term" value="F:lipopolysaccharide binding"/>
    <property type="evidence" value="ECO:0007669"/>
    <property type="project" value="TreeGrafter"/>
</dbReference>
<dbReference type="GO" id="GO:0043165">
    <property type="term" value="P:Gram-negative-bacterium-type cell outer membrane assembly"/>
    <property type="evidence" value="ECO:0007669"/>
    <property type="project" value="UniProtKB-UniRule"/>
</dbReference>
<dbReference type="GO" id="GO:0015920">
    <property type="term" value="P:lipopolysaccharide transport"/>
    <property type="evidence" value="ECO:0007669"/>
    <property type="project" value="TreeGrafter"/>
</dbReference>
<dbReference type="Gene3D" id="3.30.160.150">
    <property type="entry name" value="Lipoprotein like domain"/>
    <property type="match status" value="1"/>
</dbReference>
<dbReference type="HAMAP" id="MF_01186">
    <property type="entry name" value="LPS_assembly_LptE"/>
    <property type="match status" value="1"/>
</dbReference>
<dbReference type="InterPro" id="IPR007485">
    <property type="entry name" value="LPS_assembly_LptE"/>
</dbReference>
<dbReference type="NCBIfam" id="NF008062">
    <property type="entry name" value="PRK10796.1"/>
    <property type="match status" value="1"/>
</dbReference>
<dbReference type="PANTHER" id="PTHR38098">
    <property type="entry name" value="LPS-ASSEMBLY LIPOPROTEIN LPTE"/>
    <property type="match status" value="1"/>
</dbReference>
<dbReference type="PANTHER" id="PTHR38098:SF1">
    <property type="entry name" value="LPS-ASSEMBLY LIPOPROTEIN LPTE"/>
    <property type="match status" value="1"/>
</dbReference>
<dbReference type="Pfam" id="PF04390">
    <property type="entry name" value="LptE"/>
    <property type="match status" value="1"/>
</dbReference>
<dbReference type="PROSITE" id="PS51257">
    <property type="entry name" value="PROKAR_LIPOPROTEIN"/>
    <property type="match status" value="1"/>
</dbReference>
<proteinExistence type="inferred from homology"/>
<gene>
    <name evidence="1" type="primary">lptE</name>
    <name type="synonym">rlpB</name>
    <name type="ordered locus">plu1302</name>
</gene>